<sequence length="1094" mass="121389">MGCAYSKTCIGQICATKENSIRQTHQQAPSRGGTRATAAAAAVEEDNPVFNFSSDAVDDVDNDEIHQLGLSRDQEWGITRLSRVSSQFLPPDGSRVVKVPSCNYELRCSFLSQRGYYPDALDKANQDSFAIHTPFGSNSDDHFFGVFDGHGEFGAQCSQFVKRRLCENLLRHGRFRVDPAEACNSAFLTTNSQLHADLVDDSMSGTTAITVMVRGRTIYVANAGDSRAVLAEKRDGDLVAVDLSIDQTPFRPDELERVKLCGARVLTLDQIEGLKNPDVQCWGTEEDDDGDPPRLWVPNGMYPGTAFTRSIGDSIAETIGVVANPEIAVVELTPDNPFFVVASDGVFEFISSQTVVDMVAKHKDPRDACAAIVAESYRLWLQYETRTDDITIIVVHIDGLKDDAPRQLSSTGTQLQPPIPQVVELTGSESPSTFGWNSKNQRVRHDLSRARIRAIENSLENGHAWVPPSPAHRKTWEEEAHIERVLRDHFLFRKLTDSQCQVLLDCMQRLEANPGDIVVKQGGEGDCFYVVGSGEFEVLATQDGKNGEVPRILQRYTAEKQSSFGELALMHNKPLQASVRAVDHGTLWALKREDFRGILMSEFSNLASLKLLRSVDLLSRLTILQLSHVAESLSEACFSDGQTIVTKDQKLQGLYVIQKGRVKISFCTEVLESQNVSSLTTGITNEYDNLEIGTEVSIEKHEGSYFGEWALLGELKDSLSVVAVGEVVCVVLTKENFESAVGPLTNISDDGPKTRHSSFELSKESAKVTDTTALAKATLADLEWTTCLSTTDCSEIGLVHLKDKENLLSLKRFSKQKVKKLGKEAQVLKERNLMKNVIKPSAIVPEILCTCVDQTFAAILLNTTLACPISSLLHSPLDESSVRFITGSLVSAIEDIHKNEILFRGSSPELLMLDQSGYLQIVDFRFAKKLSGERTFTICGNADYLAPEIVQGKGHGYAADWWALGVLIYYMLEGEMPFGSWRESELDTFQKIAKGQLTFPRVLSSEAEDLITKLLEVDENLRFGSQGGPESIKKHPWFNGLKWEAISNREFQVPQEIISRIHHHLENDNVLPLETSKSLDTTEDQDAQNWLEEW</sequence>
<proteinExistence type="evidence at transcript level"/>
<protein>
    <recommendedName>
        <fullName>Protein phosphatase 2C and cyclic nucleotide-binding/kinase domain-containing protein</fullName>
    </recommendedName>
    <domain>
        <recommendedName>
            <fullName>Probable protein phosphatase 2C 19</fullName>
            <shortName>AtPP2C19</shortName>
            <ecNumber>3.1.3.16</ecNumber>
        </recommendedName>
    </domain>
    <domain>
        <recommendedName>
            <fullName>Probable inactive cyclic nucleotide-dependent protein kinase At2g20050</fullName>
        </recommendedName>
    </domain>
</protein>
<dbReference type="EC" id="3.1.3.16"/>
<dbReference type="EMBL" id="EU101468">
    <property type="protein sequence ID" value="ABU68673.1"/>
    <property type="molecule type" value="mRNA"/>
</dbReference>
<dbReference type="EMBL" id="EU101469">
    <property type="protein sequence ID" value="ABU68674.1"/>
    <property type="molecule type" value="mRNA"/>
</dbReference>
<dbReference type="EMBL" id="EU591510">
    <property type="protein sequence ID" value="ACF05481.1"/>
    <property type="molecule type" value="mRNA"/>
</dbReference>
<dbReference type="EMBL" id="AC006081">
    <property type="protein sequence ID" value="AAD24391.1"/>
    <property type="status" value="ALT_SEQ"/>
    <property type="molecule type" value="Genomic_DNA"/>
</dbReference>
<dbReference type="EMBL" id="AC006081">
    <property type="protein sequence ID" value="AAD24392.1"/>
    <property type="status" value="ALT_SEQ"/>
    <property type="molecule type" value="Genomic_DNA"/>
</dbReference>
<dbReference type="EMBL" id="CP002685">
    <property type="protein sequence ID" value="AEC06958.1"/>
    <property type="molecule type" value="Genomic_DNA"/>
</dbReference>
<dbReference type="EMBL" id="AK230102">
    <property type="protein sequence ID" value="BAF01921.1"/>
    <property type="molecule type" value="mRNA"/>
</dbReference>
<dbReference type="EMBL" id="BT022072">
    <property type="protein sequence ID" value="AAY27059.1"/>
    <property type="status" value="ALT_INIT"/>
    <property type="molecule type" value="mRNA"/>
</dbReference>
<dbReference type="EMBL" id="BT023477">
    <property type="protein sequence ID" value="AAY57316.1"/>
    <property type="molecule type" value="mRNA"/>
</dbReference>
<dbReference type="PIR" id="D84584">
    <property type="entry name" value="D84584"/>
</dbReference>
<dbReference type="RefSeq" id="NP_179595.5">
    <molecule id="Q9SL76-1"/>
    <property type="nucleotide sequence ID" value="NM_127563.6"/>
</dbReference>
<dbReference type="SMR" id="Q9SL76"/>
<dbReference type="FunCoup" id="Q9SL76">
    <property type="interactions" value="1491"/>
</dbReference>
<dbReference type="STRING" id="3702.Q9SL76"/>
<dbReference type="iPTMnet" id="Q9SL76"/>
<dbReference type="PaxDb" id="3702-AT2G20050.1"/>
<dbReference type="ProteomicsDB" id="248703">
    <molecule id="Q9SL76-1"/>
</dbReference>
<dbReference type="EnsemblPlants" id="AT2G20050.1">
    <molecule id="Q9SL76-1"/>
    <property type="protein sequence ID" value="AT2G20050.1"/>
    <property type="gene ID" value="AT2G20050"/>
</dbReference>
<dbReference type="Gramene" id="AT2G20050.1">
    <molecule id="Q9SL76-1"/>
    <property type="protein sequence ID" value="AT2G20050.1"/>
    <property type="gene ID" value="AT2G20050"/>
</dbReference>
<dbReference type="KEGG" id="ath:AT2G20050"/>
<dbReference type="Araport" id="AT2G20050"/>
<dbReference type="TAIR" id="AT2G20050"/>
<dbReference type="eggNOG" id="KOG0616">
    <property type="taxonomic scope" value="Eukaryota"/>
</dbReference>
<dbReference type="eggNOG" id="KOG0698">
    <property type="taxonomic scope" value="Eukaryota"/>
</dbReference>
<dbReference type="eggNOG" id="KOG1113">
    <property type="taxonomic scope" value="Eukaryota"/>
</dbReference>
<dbReference type="InParanoid" id="Q9SL76"/>
<dbReference type="OMA" id="VAQYEDP"/>
<dbReference type="OrthoDB" id="10264738at2759"/>
<dbReference type="PhylomeDB" id="Q9SL76"/>
<dbReference type="PRO" id="PR:Q9SL76"/>
<dbReference type="Proteomes" id="UP000006548">
    <property type="component" value="Chromosome 2"/>
</dbReference>
<dbReference type="ExpressionAtlas" id="Q9SL76">
    <property type="expression patterns" value="baseline and differential"/>
</dbReference>
<dbReference type="GO" id="GO:0005952">
    <property type="term" value="C:cAMP-dependent protein kinase complex"/>
    <property type="evidence" value="ECO:0000318"/>
    <property type="project" value="GO_Central"/>
</dbReference>
<dbReference type="GO" id="GO:0005739">
    <property type="term" value="C:mitochondrion"/>
    <property type="evidence" value="ECO:0007005"/>
    <property type="project" value="TAIR"/>
</dbReference>
<dbReference type="GO" id="GO:0005524">
    <property type="term" value="F:ATP binding"/>
    <property type="evidence" value="ECO:0007669"/>
    <property type="project" value="UniProtKB-KW"/>
</dbReference>
<dbReference type="GO" id="GO:0004691">
    <property type="term" value="F:cAMP-dependent protein kinase activity"/>
    <property type="evidence" value="ECO:0000318"/>
    <property type="project" value="GO_Central"/>
</dbReference>
<dbReference type="GO" id="GO:0046872">
    <property type="term" value="F:metal ion binding"/>
    <property type="evidence" value="ECO:0007669"/>
    <property type="project" value="UniProtKB-KW"/>
</dbReference>
<dbReference type="GO" id="GO:0004722">
    <property type="term" value="F:protein serine/threonine phosphatase activity"/>
    <property type="evidence" value="ECO:0007669"/>
    <property type="project" value="UniProtKB-EC"/>
</dbReference>
<dbReference type="GO" id="GO:0007165">
    <property type="term" value="P:signal transduction"/>
    <property type="evidence" value="ECO:0000318"/>
    <property type="project" value="GO_Central"/>
</dbReference>
<dbReference type="CDD" id="cd00038">
    <property type="entry name" value="CAP_ED"/>
    <property type="match status" value="2"/>
</dbReference>
<dbReference type="CDD" id="cd00143">
    <property type="entry name" value="PP2Cc"/>
    <property type="match status" value="1"/>
</dbReference>
<dbReference type="FunFam" id="3.60.40.10:FF:000007">
    <property type="entry name" value="Phosphatase 2C and cyclic nucleotide-binding/kinase domain-containing protein"/>
    <property type="match status" value="1"/>
</dbReference>
<dbReference type="FunFam" id="2.60.120.10:FF:000048">
    <property type="entry name" value="Protein phosphatase 2C and cyclic nucleotide-binding/kinase domain-containing protein"/>
    <property type="match status" value="1"/>
</dbReference>
<dbReference type="FunFam" id="3.30.200.20:FF:000999">
    <property type="entry name" value="Protein phosphatase 2C and cyclic nucleotide-binding/kinase domain-containing protein"/>
    <property type="match status" value="1"/>
</dbReference>
<dbReference type="Gene3D" id="2.60.120.10">
    <property type="entry name" value="Jelly Rolls"/>
    <property type="match status" value="2"/>
</dbReference>
<dbReference type="Gene3D" id="3.30.200.20">
    <property type="entry name" value="Phosphorylase Kinase, domain 1"/>
    <property type="match status" value="1"/>
</dbReference>
<dbReference type="Gene3D" id="3.60.40.10">
    <property type="entry name" value="PPM-type phosphatase domain"/>
    <property type="match status" value="1"/>
</dbReference>
<dbReference type="Gene3D" id="1.10.510.10">
    <property type="entry name" value="Transferase(Phosphotransferase) domain 1"/>
    <property type="match status" value="1"/>
</dbReference>
<dbReference type="InterPro" id="IPR000595">
    <property type="entry name" value="cNMP-bd_dom"/>
</dbReference>
<dbReference type="InterPro" id="IPR018490">
    <property type="entry name" value="cNMP-bd_dom_sf"/>
</dbReference>
<dbReference type="InterPro" id="IPR011009">
    <property type="entry name" value="Kinase-like_dom_sf"/>
</dbReference>
<dbReference type="InterPro" id="IPR000222">
    <property type="entry name" value="PP2C_BS"/>
</dbReference>
<dbReference type="InterPro" id="IPR036457">
    <property type="entry name" value="PPM-type-like_dom_sf"/>
</dbReference>
<dbReference type="InterPro" id="IPR001932">
    <property type="entry name" value="PPM-type_phosphatase-like_dom"/>
</dbReference>
<dbReference type="InterPro" id="IPR000719">
    <property type="entry name" value="Prot_kinase_dom"/>
</dbReference>
<dbReference type="InterPro" id="IPR014710">
    <property type="entry name" value="RmlC-like_jellyroll"/>
</dbReference>
<dbReference type="PANTHER" id="PTHR24353">
    <property type="entry name" value="CYCLIC NUCLEOTIDE-DEPENDENT PROTEIN KINASE"/>
    <property type="match status" value="1"/>
</dbReference>
<dbReference type="PANTHER" id="PTHR24353:SF127">
    <property type="entry name" value="PROTEIN PHOSPHATASE 2C AND CYCLIC NUCLEOTIDE-BINDING_KINASE DOMAIN-CONTAINING PROTEIN"/>
    <property type="match status" value="1"/>
</dbReference>
<dbReference type="Pfam" id="PF00027">
    <property type="entry name" value="cNMP_binding"/>
    <property type="match status" value="2"/>
</dbReference>
<dbReference type="Pfam" id="PF00069">
    <property type="entry name" value="Pkinase"/>
    <property type="match status" value="1"/>
</dbReference>
<dbReference type="Pfam" id="PF00481">
    <property type="entry name" value="PP2C"/>
    <property type="match status" value="1"/>
</dbReference>
<dbReference type="PRINTS" id="PR00103">
    <property type="entry name" value="CAMPKINASE"/>
</dbReference>
<dbReference type="SMART" id="SM00100">
    <property type="entry name" value="cNMP"/>
    <property type="match status" value="2"/>
</dbReference>
<dbReference type="SMART" id="SM00332">
    <property type="entry name" value="PP2Cc"/>
    <property type="match status" value="1"/>
</dbReference>
<dbReference type="SMART" id="SM00220">
    <property type="entry name" value="S_TKc"/>
    <property type="match status" value="1"/>
</dbReference>
<dbReference type="SUPFAM" id="SSF51206">
    <property type="entry name" value="cAMP-binding domain-like"/>
    <property type="match status" value="2"/>
</dbReference>
<dbReference type="SUPFAM" id="SSF81606">
    <property type="entry name" value="PP2C-like"/>
    <property type="match status" value="1"/>
</dbReference>
<dbReference type="SUPFAM" id="SSF56112">
    <property type="entry name" value="Protein kinase-like (PK-like)"/>
    <property type="match status" value="1"/>
</dbReference>
<dbReference type="PROSITE" id="PS50042">
    <property type="entry name" value="CNMP_BINDING_3"/>
    <property type="match status" value="2"/>
</dbReference>
<dbReference type="PROSITE" id="PS01032">
    <property type="entry name" value="PPM_1"/>
    <property type="match status" value="1"/>
</dbReference>
<dbReference type="PROSITE" id="PS51746">
    <property type="entry name" value="PPM_2"/>
    <property type="match status" value="1"/>
</dbReference>
<dbReference type="PROSITE" id="PS50011">
    <property type="entry name" value="PROTEIN_KINASE_DOM"/>
    <property type="match status" value="1"/>
</dbReference>
<name>P2C19_ARATH</name>
<reference key="1">
    <citation type="submission" date="2007-08" db="EMBL/GenBank/DDBJ databases">
        <title>Involvement of a putative cyclic nucleotide dependent hybrid phosphatase 2C/protein kinase gene in stress responses in higher plants.</title>
        <authorList>
            <person name="Van Ingelgem C."/>
            <person name="Azmi A."/>
            <person name="Inze D."/>
            <person name="Van Onckelen H."/>
            <person name="Roef L."/>
        </authorList>
    </citation>
    <scope>NUCLEOTIDE SEQUENCE [MRNA]</scope>
</reference>
<reference key="2">
    <citation type="submission" date="2008-03" db="EMBL/GenBank/DDBJ databases">
        <title>Plants have cyclic nucleotide dependent kinases.</title>
        <authorList>
            <person name="Pascaud F."/>
            <person name="Corratge C."/>
            <person name="Thibaud J.-B."/>
            <person name="Lacombe B."/>
        </authorList>
    </citation>
    <scope>NUCLEOTIDE SEQUENCE [MRNA]</scope>
</reference>
<reference key="3">
    <citation type="journal article" date="1999" name="Nature">
        <title>Sequence and analysis of chromosome 2 of the plant Arabidopsis thaliana.</title>
        <authorList>
            <person name="Lin X."/>
            <person name="Kaul S."/>
            <person name="Rounsley S.D."/>
            <person name="Shea T.P."/>
            <person name="Benito M.-I."/>
            <person name="Town C.D."/>
            <person name="Fujii C.Y."/>
            <person name="Mason T.M."/>
            <person name="Bowman C.L."/>
            <person name="Barnstead M.E."/>
            <person name="Feldblyum T.V."/>
            <person name="Buell C.R."/>
            <person name="Ketchum K.A."/>
            <person name="Lee J.J."/>
            <person name="Ronning C.M."/>
            <person name="Koo H.L."/>
            <person name="Moffat K.S."/>
            <person name="Cronin L.A."/>
            <person name="Shen M."/>
            <person name="Pai G."/>
            <person name="Van Aken S."/>
            <person name="Umayam L."/>
            <person name="Tallon L.J."/>
            <person name="Gill J.E."/>
            <person name="Adams M.D."/>
            <person name="Carrera A.J."/>
            <person name="Creasy T.H."/>
            <person name="Goodman H.M."/>
            <person name="Somerville C.R."/>
            <person name="Copenhaver G.P."/>
            <person name="Preuss D."/>
            <person name="Nierman W.C."/>
            <person name="White O."/>
            <person name="Eisen J.A."/>
            <person name="Salzberg S.L."/>
            <person name="Fraser C.M."/>
            <person name="Venter J.C."/>
        </authorList>
    </citation>
    <scope>NUCLEOTIDE SEQUENCE [LARGE SCALE GENOMIC DNA]</scope>
    <source>
        <strain>cv. Columbia</strain>
    </source>
</reference>
<reference key="4">
    <citation type="journal article" date="2017" name="Plant J.">
        <title>Araport11: a complete reannotation of the Arabidopsis thaliana reference genome.</title>
        <authorList>
            <person name="Cheng C.Y."/>
            <person name="Krishnakumar V."/>
            <person name="Chan A.P."/>
            <person name="Thibaud-Nissen F."/>
            <person name="Schobel S."/>
            <person name="Town C.D."/>
        </authorList>
    </citation>
    <scope>GENOME REANNOTATION</scope>
    <source>
        <strain>cv. Columbia</strain>
    </source>
</reference>
<reference key="5">
    <citation type="submission" date="2006-07" db="EMBL/GenBank/DDBJ databases">
        <title>Large-scale analysis of RIKEN Arabidopsis full-length (RAFL) cDNAs.</title>
        <authorList>
            <person name="Totoki Y."/>
            <person name="Seki M."/>
            <person name="Ishida J."/>
            <person name="Nakajima M."/>
            <person name="Enju A."/>
            <person name="Kamiya A."/>
            <person name="Narusaka M."/>
            <person name="Shin-i T."/>
            <person name="Nakagawa M."/>
            <person name="Sakamoto N."/>
            <person name="Oishi K."/>
            <person name="Kohara Y."/>
            <person name="Kobayashi M."/>
            <person name="Toyoda A."/>
            <person name="Sakaki Y."/>
            <person name="Sakurai T."/>
            <person name="Iida K."/>
            <person name="Akiyama K."/>
            <person name="Satou M."/>
            <person name="Toyoda T."/>
            <person name="Konagaya A."/>
            <person name="Carninci P."/>
            <person name="Kawai J."/>
            <person name="Hayashizaki Y."/>
            <person name="Shinozaki K."/>
        </authorList>
    </citation>
    <scope>NUCLEOTIDE SEQUENCE [LARGE SCALE MRNA] OF 424-1090</scope>
    <source>
        <strain>cv. Columbia</strain>
    </source>
</reference>
<reference key="6">
    <citation type="submission" date="2005-06" db="EMBL/GenBank/DDBJ databases">
        <title>Arabidopsis ORF clones.</title>
        <authorList>
            <person name="Kim C.J."/>
            <person name="Chen H."/>
            <person name="Cheuk R.F."/>
            <person name="Shinn P."/>
            <person name="Ecker J.R."/>
        </authorList>
    </citation>
    <scope>NUCLEOTIDE SEQUENCE [LARGE SCALE MRNA] OF 743-1090</scope>
    <source>
        <strain>cv. Columbia</strain>
    </source>
</reference>
<reference key="7">
    <citation type="journal article" date="2008" name="BMC Genomics">
        <title>Genome-wide and expression analysis of protein phosphatase 2C in rice and Arabidopsis.</title>
        <authorList>
            <person name="Xue T."/>
            <person name="Wang D."/>
            <person name="Zhang S."/>
            <person name="Ehlting J."/>
            <person name="Ni F."/>
            <person name="Jacab S."/>
            <person name="Zheng C."/>
            <person name="Zhong Y."/>
        </authorList>
    </citation>
    <scope>GENE FAMILY</scope>
    <scope>NOMENCLATURE</scope>
</reference>
<feature type="chain" id="PRO_0000367949" description="Protein phosphatase 2C and cyclic nucleotide-binding/kinase domain-containing protein">
    <location>
        <begin position="1"/>
        <end position="1094"/>
    </location>
</feature>
<feature type="domain" description="PPM-type phosphatase" evidence="3">
    <location>
        <begin position="107"/>
        <end position="397"/>
    </location>
</feature>
<feature type="domain" description="Protein kinase" evidence="2">
    <location>
        <begin position="785"/>
        <end position="1038"/>
    </location>
</feature>
<feature type="binding site" evidence="1">
    <location>
        <position position="148"/>
    </location>
    <ligand>
        <name>Mn(2+)</name>
        <dbReference type="ChEBI" id="CHEBI:29035"/>
        <label>1</label>
    </ligand>
</feature>
<feature type="binding site" evidence="1">
    <location>
        <position position="148"/>
    </location>
    <ligand>
        <name>Mn(2+)</name>
        <dbReference type="ChEBI" id="CHEBI:29035"/>
        <label>2</label>
    </ligand>
</feature>
<feature type="binding site" evidence="1">
    <location>
        <position position="149"/>
    </location>
    <ligand>
        <name>Mn(2+)</name>
        <dbReference type="ChEBI" id="CHEBI:29035"/>
        <label>1</label>
    </ligand>
</feature>
<feature type="binding site" evidence="1">
    <location>
        <position position="344"/>
    </location>
    <ligand>
        <name>Mn(2+)</name>
        <dbReference type="ChEBI" id="CHEBI:29035"/>
        <label>2</label>
    </ligand>
</feature>
<feature type="binding site" evidence="1">
    <location>
        <position position="388"/>
    </location>
    <ligand>
        <name>Mn(2+)</name>
        <dbReference type="ChEBI" id="CHEBI:29035"/>
        <label>2</label>
    </ligand>
</feature>
<feature type="binding site">
    <location>
        <begin position="491"/>
        <end position="616"/>
    </location>
    <ligand>
        <name>a nucleoside 3',5'-cyclic phosphate</name>
        <dbReference type="ChEBI" id="CHEBI:58464"/>
        <label>1</label>
    </ligand>
</feature>
<feature type="binding site">
    <location>
        <begin position="617"/>
        <end position="758"/>
    </location>
    <ligand>
        <name>a nucleoside 3',5'-cyclic phosphate</name>
        <dbReference type="ChEBI" id="CHEBI:58464"/>
        <label>2</label>
    </ligand>
</feature>
<feature type="binding site" evidence="2">
    <location>
        <begin position="791"/>
        <end position="799"/>
    </location>
    <ligand>
        <name>ATP</name>
        <dbReference type="ChEBI" id="CHEBI:30616"/>
    </ligand>
</feature>
<feature type="binding site" evidence="2">
    <location>
        <position position="811"/>
    </location>
    <ligand>
        <name>ATP</name>
        <dbReference type="ChEBI" id="CHEBI:30616"/>
    </ligand>
</feature>
<comment type="catalytic activity">
    <reaction>
        <text>O-phospho-L-seryl-[protein] + H2O = L-seryl-[protein] + phosphate</text>
        <dbReference type="Rhea" id="RHEA:20629"/>
        <dbReference type="Rhea" id="RHEA-COMP:9863"/>
        <dbReference type="Rhea" id="RHEA-COMP:11604"/>
        <dbReference type="ChEBI" id="CHEBI:15377"/>
        <dbReference type="ChEBI" id="CHEBI:29999"/>
        <dbReference type="ChEBI" id="CHEBI:43474"/>
        <dbReference type="ChEBI" id="CHEBI:83421"/>
        <dbReference type="EC" id="3.1.3.16"/>
    </reaction>
</comment>
<comment type="catalytic activity">
    <reaction>
        <text>O-phospho-L-threonyl-[protein] + H2O = L-threonyl-[protein] + phosphate</text>
        <dbReference type="Rhea" id="RHEA:47004"/>
        <dbReference type="Rhea" id="RHEA-COMP:11060"/>
        <dbReference type="Rhea" id="RHEA-COMP:11605"/>
        <dbReference type="ChEBI" id="CHEBI:15377"/>
        <dbReference type="ChEBI" id="CHEBI:30013"/>
        <dbReference type="ChEBI" id="CHEBI:43474"/>
        <dbReference type="ChEBI" id="CHEBI:61977"/>
        <dbReference type="EC" id="3.1.3.16"/>
    </reaction>
</comment>
<comment type="cofactor">
    <cofactor evidence="1">
        <name>Mg(2+)</name>
        <dbReference type="ChEBI" id="CHEBI:18420"/>
    </cofactor>
    <cofactor evidence="1">
        <name>Mn(2+)</name>
        <dbReference type="ChEBI" id="CHEBI:29035"/>
    </cofactor>
    <text evidence="1">Binds 2 magnesium or manganese ions per subunit.</text>
</comment>
<comment type="alternative products">
    <event type="alternative splicing"/>
    <isoform>
        <id>Q9SL76-1</id>
        <name>1</name>
        <sequence type="displayed"/>
    </isoform>
    <text>A number of isoforms are produced. According to EST sequences.</text>
</comment>
<comment type="domain">
    <text>The protein kinase domain is predicted to be catalytically inactive.</text>
</comment>
<comment type="similarity">
    <text evidence="4">In the N-terminal section; belongs to the PP2C family.</text>
</comment>
<comment type="similarity">
    <text evidence="4">In the C-terminal section; belongs to the protein kinase superfamily. AGC Ser/Thr protein kinase family.</text>
</comment>
<comment type="sequence caution" evidence="4">
    <conflict type="erroneous gene model prediction">
        <sequence resource="EMBL-CDS" id="AAD24391"/>
    </conflict>
    <text>Was originally thought to correspond to two different genes At2g20040 and At2g20050.</text>
</comment>
<comment type="sequence caution" evidence="4">
    <conflict type="erroneous gene model prediction">
        <sequence resource="EMBL-CDS" id="AAD24392"/>
    </conflict>
    <text>Was originally thought to correspond to two different genes At2g20040 and At2g20050.</text>
</comment>
<comment type="sequence caution" evidence="4">
    <conflict type="erroneous initiation">
        <sequence resource="EMBL-CDS" id="AAY27059"/>
    </conflict>
</comment>
<keyword id="KW-0025">Alternative splicing</keyword>
<keyword id="KW-0067">ATP-binding</keyword>
<keyword id="KW-0378">Hydrolase</keyword>
<keyword id="KW-0418">Kinase</keyword>
<keyword id="KW-0460">Magnesium</keyword>
<keyword id="KW-0464">Manganese</keyword>
<keyword id="KW-0479">Metal-binding</keyword>
<keyword id="KW-0547">Nucleotide-binding</keyword>
<keyword id="KW-0904">Protein phosphatase</keyword>
<keyword id="KW-1185">Reference proteome</keyword>
<keyword id="KW-0677">Repeat</keyword>
<keyword id="KW-0723">Serine/threonine-protein kinase</keyword>
<keyword id="KW-0808">Transferase</keyword>
<accession>Q9SL76</accession>
<accession>B5KQ16</accession>
<accession>B5KQ17</accession>
<accession>Q0WLT6</accession>
<accession>Q9SL77</accession>
<organism>
    <name type="scientific">Arabidopsis thaliana</name>
    <name type="common">Mouse-ear cress</name>
    <dbReference type="NCBI Taxonomy" id="3702"/>
    <lineage>
        <taxon>Eukaryota</taxon>
        <taxon>Viridiplantae</taxon>
        <taxon>Streptophyta</taxon>
        <taxon>Embryophyta</taxon>
        <taxon>Tracheophyta</taxon>
        <taxon>Spermatophyta</taxon>
        <taxon>Magnoliopsida</taxon>
        <taxon>eudicotyledons</taxon>
        <taxon>Gunneridae</taxon>
        <taxon>Pentapetalae</taxon>
        <taxon>rosids</taxon>
        <taxon>malvids</taxon>
        <taxon>Brassicales</taxon>
        <taxon>Brassicaceae</taxon>
        <taxon>Camelineae</taxon>
        <taxon>Arabidopsis</taxon>
    </lineage>
</organism>
<gene>
    <name type="ordered locus">At2g20050/At2g20040</name>
    <name type="ORF">T2G17.15/T2G17.16</name>
</gene>
<evidence type="ECO:0000250" key="1"/>
<evidence type="ECO:0000255" key="2">
    <source>
        <dbReference type="PROSITE-ProRule" id="PRU00159"/>
    </source>
</evidence>
<evidence type="ECO:0000255" key="3">
    <source>
        <dbReference type="PROSITE-ProRule" id="PRU01082"/>
    </source>
</evidence>
<evidence type="ECO:0000305" key="4"/>